<sequence>MPSITKQIMSGAKWTSISTMCITIIQIVQFALLGNMMTLTEFGLVGMITTVTVFAQIVLDMGFGAALIQRDDATERQLSTLYWLNIMTGVLLFVLLYVSSPVIAGFYQREELVFLVRILAIMFLIAPIGQQYQYMLQKQLHFNTLSKIEIFSNVLSFGYLAIAVFMMDAILAYVISQVLLQSSKGILYWAVYRKKWHPAFVFDLRGMKDFFSFGAFQLSSRLVNRLGANIDMILIGRFIGAEALGIYNLAYQIVTIPVLKINPIVTRVAFPIFAKNKYENSVIREGFLNMTKMLALVSFPLLIGLVSVSDAFITAVFGEKWLAAVPILNVLAIVGILRVLMNPNGSVLLAKGRADLAFYWDSGVLLLYGLSLFAAVQTGSLLTVAWVYAIISVVNFLIGRWLLAYVIKLNLSAYFQSIMKPFLITAAMGIIAFGVSLSTEHFSMQAEMRLAISVAAGALCYLFLLVKAYPQTKSKLLRKGRLS</sequence>
<name>TUAB_BACSU</name>
<organism>
    <name type="scientific">Bacillus subtilis (strain 168)</name>
    <dbReference type="NCBI Taxonomy" id="224308"/>
    <lineage>
        <taxon>Bacteria</taxon>
        <taxon>Bacillati</taxon>
        <taxon>Bacillota</taxon>
        <taxon>Bacilli</taxon>
        <taxon>Bacillales</taxon>
        <taxon>Bacillaceae</taxon>
        <taxon>Bacillus</taxon>
    </lineage>
</organism>
<protein>
    <recommendedName>
        <fullName>Teichuronic acid biosynthesis protein TuaB</fullName>
    </recommendedName>
</protein>
<dbReference type="EMBL" id="AF015609">
    <property type="protein sequence ID" value="AAB94863.1"/>
    <property type="molecule type" value="Genomic_DNA"/>
</dbReference>
<dbReference type="EMBL" id="AL009126">
    <property type="protein sequence ID" value="CAB15577.1"/>
    <property type="molecule type" value="Genomic_DNA"/>
</dbReference>
<dbReference type="PIR" id="D69727">
    <property type="entry name" value="D69727"/>
</dbReference>
<dbReference type="RefSeq" id="NP_391440.1">
    <property type="nucleotide sequence ID" value="NC_000964.3"/>
</dbReference>
<dbReference type="RefSeq" id="WP_003244371.1">
    <property type="nucleotide sequence ID" value="NZ_OZ025638.1"/>
</dbReference>
<dbReference type="SMR" id="O32273"/>
<dbReference type="FunCoup" id="O32273">
    <property type="interactions" value="40"/>
</dbReference>
<dbReference type="STRING" id="224308.BSU35600"/>
<dbReference type="TCDB" id="2.A.66.2.6">
    <property type="family name" value="the multidrug/oligosaccharidyl-lipid/polysaccharide (mop) flippase superfamily"/>
</dbReference>
<dbReference type="PaxDb" id="224308-BSU35600"/>
<dbReference type="EnsemblBacteria" id="CAB15577">
    <property type="protein sequence ID" value="CAB15577"/>
    <property type="gene ID" value="BSU_35600"/>
</dbReference>
<dbReference type="GeneID" id="936770"/>
<dbReference type="KEGG" id="bsu:BSU35600"/>
<dbReference type="PATRIC" id="fig|224308.179.peg.3851"/>
<dbReference type="eggNOG" id="COG2244">
    <property type="taxonomic scope" value="Bacteria"/>
</dbReference>
<dbReference type="InParanoid" id="O32273"/>
<dbReference type="OrthoDB" id="9770347at2"/>
<dbReference type="PhylomeDB" id="O32273"/>
<dbReference type="BioCyc" id="BSUB:BSU35600-MONOMER"/>
<dbReference type="BioCyc" id="MetaCyc:BSU35600-MONOMER"/>
<dbReference type="UniPathway" id="UPA00844"/>
<dbReference type="Proteomes" id="UP000001570">
    <property type="component" value="Chromosome"/>
</dbReference>
<dbReference type="GO" id="GO:0005886">
    <property type="term" value="C:plasma membrane"/>
    <property type="evidence" value="ECO:0000318"/>
    <property type="project" value="GO_Central"/>
</dbReference>
<dbReference type="GO" id="GO:0071555">
    <property type="term" value="P:cell wall organization"/>
    <property type="evidence" value="ECO:0007669"/>
    <property type="project" value="UniProtKB-KW"/>
</dbReference>
<dbReference type="GO" id="GO:0050845">
    <property type="term" value="P:teichuronic acid biosynthetic process"/>
    <property type="evidence" value="ECO:0007669"/>
    <property type="project" value="UniProtKB-UniPathway"/>
</dbReference>
<dbReference type="CDD" id="cd13127">
    <property type="entry name" value="MATE_tuaB_like"/>
    <property type="match status" value="1"/>
</dbReference>
<dbReference type="InterPro" id="IPR050833">
    <property type="entry name" value="Poly_Biosynth_Transport"/>
</dbReference>
<dbReference type="InterPro" id="IPR002797">
    <property type="entry name" value="Polysacc_synth"/>
</dbReference>
<dbReference type="NCBIfam" id="NF007773">
    <property type="entry name" value="PRK10459.1"/>
    <property type="match status" value="1"/>
</dbReference>
<dbReference type="NCBIfam" id="NF047674">
    <property type="entry name" value="TeichurnBiosyTuaB"/>
    <property type="match status" value="1"/>
</dbReference>
<dbReference type="PANTHER" id="PTHR30250:SF10">
    <property type="entry name" value="LIPOPOLYSACCHARIDE BIOSYNTHESIS PROTEIN WZXC"/>
    <property type="match status" value="1"/>
</dbReference>
<dbReference type="PANTHER" id="PTHR30250">
    <property type="entry name" value="PST FAMILY PREDICTED COLANIC ACID TRANSPORTER"/>
    <property type="match status" value="1"/>
</dbReference>
<dbReference type="Pfam" id="PF01943">
    <property type="entry name" value="Polysacc_synt"/>
    <property type="match status" value="1"/>
</dbReference>
<keyword id="KW-1003">Cell membrane</keyword>
<keyword id="KW-0961">Cell wall biogenesis/degradation</keyword>
<keyword id="KW-0472">Membrane</keyword>
<keyword id="KW-1185">Reference proteome</keyword>
<keyword id="KW-0346">Stress response</keyword>
<keyword id="KW-0812">Transmembrane</keyword>
<keyword id="KW-1133">Transmembrane helix</keyword>
<feature type="chain" id="PRO_0000166452" description="Teichuronic acid biosynthesis protein TuaB">
    <location>
        <begin position="1"/>
        <end position="483"/>
    </location>
</feature>
<feature type="transmembrane region" description="Helical" evidence="1">
    <location>
        <begin position="15"/>
        <end position="34"/>
    </location>
</feature>
<feature type="transmembrane region" description="Helical" evidence="1">
    <location>
        <begin position="41"/>
        <end position="63"/>
    </location>
</feature>
<feature type="transmembrane region" description="Helical" evidence="1">
    <location>
        <begin position="83"/>
        <end position="105"/>
    </location>
</feature>
<feature type="transmembrane region" description="Helical" evidence="1">
    <location>
        <begin position="112"/>
        <end position="134"/>
    </location>
</feature>
<feature type="transmembrane region" description="Helical" evidence="1">
    <location>
        <begin position="154"/>
        <end position="176"/>
    </location>
</feature>
<feature type="transmembrane region" description="Helical" evidence="1">
    <location>
        <begin position="294"/>
        <end position="316"/>
    </location>
</feature>
<feature type="transmembrane region" description="Helical" evidence="1">
    <location>
        <begin position="321"/>
        <end position="343"/>
    </location>
</feature>
<feature type="transmembrane region" description="Helical" evidence="1">
    <location>
        <begin position="356"/>
        <end position="378"/>
    </location>
</feature>
<feature type="transmembrane region" description="Helical" evidence="1">
    <location>
        <begin position="382"/>
        <end position="404"/>
    </location>
</feature>
<feature type="transmembrane region" description="Helical" evidence="1">
    <location>
        <begin position="411"/>
        <end position="433"/>
    </location>
</feature>
<feature type="transmembrane region" description="Helical" evidence="1">
    <location>
        <begin position="448"/>
        <end position="470"/>
    </location>
</feature>
<evidence type="ECO:0000255" key="1"/>
<evidence type="ECO:0000305" key="2"/>
<proteinExistence type="evidence at transcript level"/>
<gene>
    <name type="primary">tuaB</name>
    <name type="synonym">yvhB</name>
    <name type="ordered locus">BSU35600</name>
</gene>
<reference key="1">
    <citation type="journal article" date="1999" name="Mol. Microbiol.">
        <title>Teichuronic acid operon of Bacillus subtilis 168.</title>
        <authorList>
            <person name="Soldo B."/>
            <person name="Lazarevic V."/>
            <person name="Pagni M."/>
            <person name="Karamata D."/>
        </authorList>
    </citation>
    <scope>NUCLEOTIDE SEQUENCE [GENOMIC DNA]</scope>
    <scope>PUTATIVE FUNCTION</scope>
    <source>
        <strain>168</strain>
    </source>
</reference>
<reference key="2">
    <citation type="journal article" date="1997" name="Nature">
        <title>The complete genome sequence of the Gram-positive bacterium Bacillus subtilis.</title>
        <authorList>
            <person name="Kunst F."/>
            <person name="Ogasawara N."/>
            <person name="Moszer I."/>
            <person name="Albertini A.M."/>
            <person name="Alloni G."/>
            <person name="Azevedo V."/>
            <person name="Bertero M.G."/>
            <person name="Bessieres P."/>
            <person name="Bolotin A."/>
            <person name="Borchert S."/>
            <person name="Borriss R."/>
            <person name="Boursier L."/>
            <person name="Brans A."/>
            <person name="Braun M."/>
            <person name="Brignell S.C."/>
            <person name="Bron S."/>
            <person name="Brouillet S."/>
            <person name="Bruschi C.V."/>
            <person name="Caldwell B."/>
            <person name="Capuano V."/>
            <person name="Carter N.M."/>
            <person name="Choi S.-K."/>
            <person name="Codani J.-J."/>
            <person name="Connerton I.F."/>
            <person name="Cummings N.J."/>
            <person name="Daniel R.A."/>
            <person name="Denizot F."/>
            <person name="Devine K.M."/>
            <person name="Duesterhoeft A."/>
            <person name="Ehrlich S.D."/>
            <person name="Emmerson P.T."/>
            <person name="Entian K.-D."/>
            <person name="Errington J."/>
            <person name="Fabret C."/>
            <person name="Ferrari E."/>
            <person name="Foulger D."/>
            <person name="Fritz C."/>
            <person name="Fujita M."/>
            <person name="Fujita Y."/>
            <person name="Fuma S."/>
            <person name="Galizzi A."/>
            <person name="Galleron N."/>
            <person name="Ghim S.-Y."/>
            <person name="Glaser P."/>
            <person name="Goffeau A."/>
            <person name="Golightly E.J."/>
            <person name="Grandi G."/>
            <person name="Guiseppi G."/>
            <person name="Guy B.J."/>
            <person name="Haga K."/>
            <person name="Haiech J."/>
            <person name="Harwood C.R."/>
            <person name="Henaut A."/>
            <person name="Hilbert H."/>
            <person name="Holsappel S."/>
            <person name="Hosono S."/>
            <person name="Hullo M.-F."/>
            <person name="Itaya M."/>
            <person name="Jones L.-M."/>
            <person name="Joris B."/>
            <person name="Karamata D."/>
            <person name="Kasahara Y."/>
            <person name="Klaerr-Blanchard M."/>
            <person name="Klein C."/>
            <person name="Kobayashi Y."/>
            <person name="Koetter P."/>
            <person name="Koningstein G."/>
            <person name="Krogh S."/>
            <person name="Kumano M."/>
            <person name="Kurita K."/>
            <person name="Lapidus A."/>
            <person name="Lardinois S."/>
            <person name="Lauber J."/>
            <person name="Lazarevic V."/>
            <person name="Lee S.-M."/>
            <person name="Levine A."/>
            <person name="Liu H."/>
            <person name="Masuda S."/>
            <person name="Mauel C."/>
            <person name="Medigue C."/>
            <person name="Medina N."/>
            <person name="Mellado R.P."/>
            <person name="Mizuno M."/>
            <person name="Moestl D."/>
            <person name="Nakai S."/>
            <person name="Noback M."/>
            <person name="Noone D."/>
            <person name="O'Reilly M."/>
            <person name="Ogawa K."/>
            <person name="Ogiwara A."/>
            <person name="Oudega B."/>
            <person name="Park S.-H."/>
            <person name="Parro V."/>
            <person name="Pohl T.M."/>
            <person name="Portetelle D."/>
            <person name="Porwollik S."/>
            <person name="Prescott A.M."/>
            <person name="Presecan E."/>
            <person name="Pujic P."/>
            <person name="Purnelle B."/>
            <person name="Rapoport G."/>
            <person name="Rey M."/>
            <person name="Reynolds S."/>
            <person name="Rieger M."/>
            <person name="Rivolta C."/>
            <person name="Rocha E."/>
            <person name="Roche B."/>
            <person name="Rose M."/>
            <person name="Sadaie Y."/>
            <person name="Sato T."/>
            <person name="Scanlan E."/>
            <person name="Schleich S."/>
            <person name="Schroeter R."/>
            <person name="Scoffone F."/>
            <person name="Sekiguchi J."/>
            <person name="Sekowska A."/>
            <person name="Seror S.J."/>
            <person name="Serror P."/>
            <person name="Shin B.-S."/>
            <person name="Soldo B."/>
            <person name="Sorokin A."/>
            <person name="Tacconi E."/>
            <person name="Takagi T."/>
            <person name="Takahashi H."/>
            <person name="Takemaru K."/>
            <person name="Takeuchi M."/>
            <person name="Tamakoshi A."/>
            <person name="Tanaka T."/>
            <person name="Terpstra P."/>
            <person name="Tognoni A."/>
            <person name="Tosato V."/>
            <person name="Uchiyama S."/>
            <person name="Vandenbol M."/>
            <person name="Vannier F."/>
            <person name="Vassarotti A."/>
            <person name="Viari A."/>
            <person name="Wambutt R."/>
            <person name="Wedler E."/>
            <person name="Wedler H."/>
            <person name="Weitzenegger T."/>
            <person name="Winters P."/>
            <person name="Wipat A."/>
            <person name="Yamamoto H."/>
            <person name="Yamane K."/>
            <person name="Yasumoto K."/>
            <person name="Yata K."/>
            <person name="Yoshida K."/>
            <person name="Yoshikawa H.-F."/>
            <person name="Zumstein E."/>
            <person name="Yoshikawa H."/>
            <person name="Danchin A."/>
        </authorList>
    </citation>
    <scope>NUCLEOTIDE SEQUENCE [LARGE SCALE GENOMIC DNA]</scope>
    <source>
        <strain>168</strain>
    </source>
</reference>
<accession>O32273</accession>
<comment type="function">
    <text>Might be involved in the translocation of teichuronic acid repeating units from the inner to the outer surface of the membrane.</text>
</comment>
<comment type="pathway">
    <text>Cell wall biogenesis; teichuronic acid biosynthesis.</text>
</comment>
<comment type="subcellular location">
    <subcellularLocation>
        <location evidence="2">Cell membrane</location>
        <topology evidence="2">Multi-pass membrane protein</topology>
    </subcellularLocation>
</comment>
<comment type="induction">
    <text>By phosphate starvation, via the PhoP/PhoR two-component regulatory system.</text>
</comment>
<comment type="miscellaneous">
    <text>The nature of the anionic polymer present in the cell wall of B.subtilis depends on phosphate availability. Under phosphate-replete growth conditions teichoic acids are present, whereas under phosphate-depleted conditions, at least part of the wall teichoic acid is replaced with teichuronic acid, a non-phosphate containing anionic polymer. The synthesis of teichuronic acid is accompanied by degradation of teichoic acid and reutilization of liberated phosphate for other cellular processes such as nucleic acid synthesis.</text>
</comment>
<comment type="similarity">
    <text evidence="2">Belongs to the polysaccharide synthase family.</text>
</comment>